<evidence type="ECO:0000255" key="1">
    <source>
        <dbReference type="HAMAP-Rule" id="MF_01628"/>
    </source>
</evidence>
<comment type="function">
    <text evidence="1">The enzymes which catalyze the reversible phosphorolysis of pyrimidine nucleosides are involved in the degradation of these compounds and in their utilization as carbon and energy sources, or in the rescue of pyrimidine bases for nucleotide synthesis.</text>
</comment>
<comment type="catalytic activity">
    <reaction evidence="1">
        <text>thymidine + phosphate = 2-deoxy-alpha-D-ribose 1-phosphate + thymine</text>
        <dbReference type="Rhea" id="RHEA:16037"/>
        <dbReference type="ChEBI" id="CHEBI:17748"/>
        <dbReference type="ChEBI" id="CHEBI:17821"/>
        <dbReference type="ChEBI" id="CHEBI:43474"/>
        <dbReference type="ChEBI" id="CHEBI:57259"/>
        <dbReference type="EC" id="2.4.2.4"/>
    </reaction>
</comment>
<comment type="pathway">
    <text evidence="1">Pyrimidine metabolism; dTMP biosynthesis via salvage pathway; dTMP from thymine: step 1/2.</text>
</comment>
<comment type="subunit">
    <text evidence="1">Homodimer.</text>
</comment>
<comment type="similarity">
    <text evidence="1">Belongs to the thymidine/pyrimidine-nucleoside phosphorylase family.</text>
</comment>
<organism>
    <name type="scientific">Salmonella arizonae (strain ATCC BAA-731 / CDC346-86 / RSK2980)</name>
    <dbReference type="NCBI Taxonomy" id="41514"/>
    <lineage>
        <taxon>Bacteria</taxon>
        <taxon>Pseudomonadati</taxon>
        <taxon>Pseudomonadota</taxon>
        <taxon>Gammaproteobacteria</taxon>
        <taxon>Enterobacterales</taxon>
        <taxon>Enterobacteriaceae</taxon>
        <taxon>Salmonella</taxon>
    </lineage>
</organism>
<gene>
    <name evidence="1" type="primary">deoA</name>
    <name type="ordered locus">SARI_03010</name>
</gene>
<proteinExistence type="inferred from homology"/>
<accession>A9MRA6</accession>
<keyword id="KW-0328">Glycosyltransferase</keyword>
<keyword id="KW-1185">Reference proteome</keyword>
<keyword id="KW-0808">Transferase</keyword>
<name>TYPH_SALAR</name>
<feature type="chain" id="PRO_1000088108" description="Thymidine phosphorylase">
    <location>
        <begin position="1"/>
        <end position="440"/>
    </location>
</feature>
<reference key="1">
    <citation type="submission" date="2007-11" db="EMBL/GenBank/DDBJ databases">
        <authorList>
            <consortium name="The Salmonella enterica serovar Arizonae Genome Sequencing Project"/>
            <person name="McClelland M."/>
            <person name="Sanderson E.K."/>
            <person name="Porwollik S."/>
            <person name="Spieth J."/>
            <person name="Clifton W.S."/>
            <person name="Fulton R."/>
            <person name="Chunyan W."/>
            <person name="Wollam A."/>
            <person name="Shah N."/>
            <person name="Pepin K."/>
            <person name="Bhonagiri V."/>
            <person name="Nash W."/>
            <person name="Johnson M."/>
            <person name="Thiruvilangam P."/>
            <person name="Wilson R."/>
        </authorList>
    </citation>
    <scope>NUCLEOTIDE SEQUENCE [LARGE SCALE GENOMIC DNA]</scope>
    <source>
        <strain>ATCC BAA-731 / CDC346-86 / RSK2980</strain>
    </source>
</reference>
<dbReference type="EC" id="2.4.2.4" evidence="1"/>
<dbReference type="EMBL" id="CP000880">
    <property type="protein sequence ID" value="ABX22854.1"/>
    <property type="molecule type" value="Genomic_DNA"/>
</dbReference>
<dbReference type="SMR" id="A9MRA6"/>
<dbReference type="STRING" id="41514.SARI_03010"/>
<dbReference type="KEGG" id="ses:SARI_03010"/>
<dbReference type="HOGENOM" id="CLU_025040_0_1_6"/>
<dbReference type="UniPathway" id="UPA00578">
    <property type="reaction ID" value="UER00638"/>
</dbReference>
<dbReference type="Proteomes" id="UP000002084">
    <property type="component" value="Chromosome"/>
</dbReference>
<dbReference type="GO" id="GO:0005829">
    <property type="term" value="C:cytosol"/>
    <property type="evidence" value="ECO:0007669"/>
    <property type="project" value="TreeGrafter"/>
</dbReference>
<dbReference type="GO" id="GO:0004645">
    <property type="term" value="F:1,4-alpha-oligoglucan phosphorylase activity"/>
    <property type="evidence" value="ECO:0007669"/>
    <property type="project" value="InterPro"/>
</dbReference>
<dbReference type="GO" id="GO:0009032">
    <property type="term" value="F:thymidine phosphorylase activity"/>
    <property type="evidence" value="ECO:0007669"/>
    <property type="project" value="UniProtKB-UniRule"/>
</dbReference>
<dbReference type="GO" id="GO:0006206">
    <property type="term" value="P:pyrimidine nucleobase metabolic process"/>
    <property type="evidence" value="ECO:0007669"/>
    <property type="project" value="InterPro"/>
</dbReference>
<dbReference type="GO" id="GO:0046104">
    <property type="term" value="P:thymidine metabolic process"/>
    <property type="evidence" value="ECO:0007669"/>
    <property type="project" value="UniProtKB-UniRule"/>
</dbReference>
<dbReference type="FunFam" id="3.40.1030.10:FF:000001">
    <property type="entry name" value="Thymidine phosphorylase"/>
    <property type="match status" value="1"/>
</dbReference>
<dbReference type="FunFam" id="3.90.1170.30:FF:000001">
    <property type="entry name" value="Thymidine phosphorylase"/>
    <property type="match status" value="1"/>
</dbReference>
<dbReference type="Gene3D" id="3.40.1030.10">
    <property type="entry name" value="Nucleoside phosphorylase/phosphoribosyltransferase catalytic domain"/>
    <property type="match status" value="1"/>
</dbReference>
<dbReference type="Gene3D" id="3.90.1170.30">
    <property type="entry name" value="Pyrimidine nucleoside phosphorylase-like, C-terminal domain"/>
    <property type="match status" value="1"/>
</dbReference>
<dbReference type="Gene3D" id="1.20.970.10">
    <property type="entry name" value="Transferase, Pyrimidine Nucleoside Phosphorylase, Chain C"/>
    <property type="match status" value="1"/>
</dbReference>
<dbReference type="HAMAP" id="MF_01628">
    <property type="entry name" value="Thymid_phosp"/>
    <property type="match status" value="1"/>
</dbReference>
<dbReference type="InterPro" id="IPR000312">
    <property type="entry name" value="Glycosyl_Trfase_fam3"/>
</dbReference>
<dbReference type="InterPro" id="IPR017459">
    <property type="entry name" value="Glycosyl_Trfase_fam3_N_dom"/>
</dbReference>
<dbReference type="InterPro" id="IPR036320">
    <property type="entry name" value="Glycosyl_Trfase_fam3_N_dom_sf"/>
</dbReference>
<dbReference type="InterPro" id="IPR035902">
    <property type="entry name" value="Nuc_phospho_transferase"/>
</dbReference>
<dbReference type="InterPro" id="IPR036566">
    <property type="entry name" value="PYNP-like_C_sf"/>
</dbReference>
<dbReference type="InterPro" id="IPR013102">
    <property type="entry name" value="PYNP_C"/>
</dbReference>
<dbReference type="InterPro" id="IPR018090">
    <property type="entry name" value="Pyrmidine_PPas_bac/euk"/>
</dbReference>
<dbReference type="InterPro" id="IPR017872">
    <property type="entry name" value="Pyrmidine_PPase_CS"/>
</dbReference>
<dbReference type="InterPro" id="IPR000053">
    <property type="entry name" value="Thymidine/pyrmidine_PPase"/>
</dbReference>
<dbReference type="InterPro" id="IPR013465">
    <property type="entry name" value="Thymidine_Pase"/>
</dbReference>
<dbReference type="NCBIfam" id="NF004490">
    <property type="entry name" value="PRK05820.1"/>
    <property type="match status" value="1"/>
</dbReference>
<dbReference type="NCBIfam" id="TIGR02643">
    <property type="entry name" value="T_phosphoryl"/>
    <property type="match status" value="1"/>
</dbReference>
<dbReference type="NCBIfam" id="TIGR02644">
    <property type="entry name" value="Y_phosphoryl"/>
    <property type="match status" value="1"/>
</dbReference>
<dbReference type="PANTHER" id="PTHR10515">
    <property type="entry name" value="THYMIDINE PHOSPHORYLASE"/>
    <property type="match status" value="1"/>
</dbReference>
<dbReference type="PANTHER" id="PTHR10515:SF0">
    <property type="entry name" value="THYMIDINE PHOSPHORYLASE"/>
    <property type="match status" value="1"/>
</dbReference>
<dbReference type="Pfam" id="PF02885">
    <property type="entry name" value="Glycos_trans_3N"/>
    <property type="match status" value="1"/>
</dbReference>
<dbReference type="Pfam" id="PF00591">
    <property type="entry name" value="Glycos_transf_3"/>
    <property type="match status" value="1"/>
</dbReference>
<dbReference type="Pfam" id="PF07831">
    <property type="entry name" value="PYNP_C"/>
    <property type="match status" value="1"/>
</dbReference>
<dbReference type="PIRSF" id="PIRSF000478">
    <property type="entry name" value="TP_PyNP"/>
    <property type="match status" value="1"/>
</dbReference>
<dbReference type="SMART" id="SM00941">
    <property type="entry name" value="PYNP_C"/>
    <property type="match status" value="1"/>
</dbReference>
<dbReference type="SUPFAM" id="SSF52418">
    <property type="entry name" value="Nucleoside phosphorylase/phosphoribosyltransferase catalytic domain"/>
    <property type="match status" value="1"/>
</dbReference>
<dbReference type="SUPFAM" id="SSF47648">
    <property type="entry name" value="Nucleoside phosphorylase/phosphoribosyltransferase N-terminal domain"/>
    <property type="match status" value="1"/>
</dbReference>
<dbReference type="SUPFAM" id="SSF54680">
    <property type="entry name" value="Pyrimidine nucleoside phosphorylase C-terminal domain"/>
    <property type="match status" value="1"/>
</dbReference>
<dbReference type="PROSITE" id="PS00647">
    <property type="entry name" value="THYMID_PHOSPHORYLASE"/>
    <property type="match status" value="1"/>
</dbReference>
<protein>
    <recommendedName>
        <fullName evidence="1">Thymidine phosphorylase</fullName>
        <ecNumber evidence="1">2.4.2.4</ecNumber>
    </recommendedName>
    <alternativeName>
        <fullName evidence="1">TdRPase</fullName>
    </alternativeName>
</protein>
<sequence>MFLAQEIIRKKRDGHTLSDEEIRFFINGIRDNTISEGQIAALAMTIFFHDMTMPERVSLTMAMRDSGTVLDWKNLNLNGPIVDKHSTGGVGDVTSLMLGPMVAACGGYVPMISGRGLGHTGGTLDKLEAIPGFDIFPDDNRFRDIIQDVGVAIIGQTNSLAPADKRFYATRDITATVDSIPLITGSILAKKLAEGLDALVMDVKVGSGAFMPTYELSEALAEAIVGVANGAGVRTTALLTDMNQVLASSAGNALEVREAVQFLTGEYRNPRLFDVTMALCIEMLISGQLAKDDAQARAKLQAVLDNGKAAEVFGRMVAAQKGPTDFVENYDKYLPAAMLSKAVYADTEGFVSAMDTRALGMAVVSMGGGRRQASDTIDYSVGFTDMVRLGDSVDGQRPLAVIHAKDEANWQEAAKAVKAAIILDDKAPASTPSIYRRITE</sequence>